<accession>Q8TGN1</accession>
<dbReference type="EMBL" id="Z49640">
    <property type="status" value="NOT_ANNOTATED_CDS"/>
    <property type="molecule type" value="Genomic_DNA"/>
</dbReference>
<dbReference type="EMBL" id="AF479959">
    <property type="protein sequence ID" value="AAL79272.1"/>
    <property type="molecule type" value="Genomic_DNA"/>
</dbReference>
<dbReference type="STRING" id="4932.YJR140W-A"/>
<dbReference type="PaxDb" id="4932-YJR140W-A"/>
<dbReference type="EnsemblFungi" id="YJR140W-A_mRNA">
    <property type="protein sequence ID" value="YJR140W-A"/>
    <property type="gene ID" value="YJR140W-A"/>
</dbReference>
<dbReference type="AGR" id="SGD:S000028666"/>
<dbReference type="SGD" id="S000028666">
    <property type="gene designation" value="YJR140W-A"/>
</dbReference>
<dbReference type="HOGENOM" id="CLU_3144070_0_0_1"/>
<feature type="chain" id="PRO_0000299765" description="Putative uncharacterized protein YJR140W-A">
    <location>
        <begin position="1"/>
        <end position="49"/>
    </location>
</feature>
<sequence>MPKQTLSNAIPLCPFFNWKASFNPDDISSGYFPWSKTWFSCSLIFRNSW</sequence>
<protein>
    <recommendedName>
        <fullName>Putative uncharacterized protein YJR140W-A</fullName>
    </recommendedName>
</protein>
<organism>
    <name type="scientific">Saccharomyces cerevisiae (strain ATCC 204508 / S288c)</name>
    <name type="common">Baker's yeast</name>
    <dbReference type="NCBI Taxonomy" id="559292"/>
    <lineage>
        <taxon>Eukaryota</taxon>
        <taxon>Fungi</taxon>
        <taxon>Dikarya</taxon>
        <taxon>Ascomycota</taxon>
        <taxon>Saccharomycotina</taxon>
        <taxon>Saccharomycetes</taxon>
        <taxon>Saccharomycetales</taxon>
        <taxon>Saccharomycetaceae</taxon>
        <taxon>Saccharomyces</taxon>
    </lineage>
</organism>
<proteinExistence type="uncertain"/>
<reference key="1">
    <citation type="journal article" date="1996" name="EMBO J.">
        <title>Complete nucleotide sequence of Saccharomyces cerevisiae chromosome X.</title>
        <authorList>
            <person name="Galibert F."/>
            <person name="Alexandraki D."/>
            <person name="Baur A."/>
            <person name="Boles E."/>
            <person name="Chalwatzis N."/>
            <person name="Chuat J.-C."/>
            <person name="Coster F."/>
            <person name="Cziepluch C."/>
            <person name="de Haan M."/>
            <person name="Domdey H."/>
            <person name="Durand P."/>
            <person name="Entian K.-D."/>
            <person name="Gatius M."/>
            <person name="Goffeau A."/>
            <person name="Grivell L.A."/>
            <person name="Hennemann A."/>
            <person name="Herbert C.J."/>
            <person name="Heumann K."/>
            <person name="Hilger F."/>
            <person name="Hollenberg C.P."/>
            <person name="Huang M.-E."/>
            <person name="Jacq C."/>
            <person name="Jauniaux J.-C."/>
            <person name="Katsoulou C."/>
            <person name="Kirchrath L."/>
            <person name="Kleine K."/>
            <person name="Kordes E."/>
            <person name="Koetter P."/>
            <person name="Liebl S."/>
            <person name="Louis E.J."/>
            <person name="Manus V."/>
            <person name="Mewes H.-W."/>
            <person name="Miosga T."/>
            <person name="Obermaier B."/>
            <person name="Perea J."/>
            <person name="Pohl T.M."/>
            <person name="Portetelle D."/>
            <person name="Pujol A."/>
            <person name="Purnelle B."/>
            <person name="Ramezani Rad M."/>
            <person name="Rasmussen S.W."/>
            <person name="Rose M."/>
            <person name="Rossau R."/>
            <person name="Schaaff-Gerstenschlaeger I."/>
            <person name="Smits P.H.M."/>
            <person name="Scarcez T."/>
            <person name="Soriano N."/>
            <person name="To Van D."/>
            <person name="Tzermia M."/>
            <person name="Van Broekhoven A."/>
            <person name="Vandenbol M."/>
            <person name="Wedler H."/>
            <person name="von Wettstein D."/>
            <person name="Wambutt R."/>
            <person name="Zagulski M."/>
            <person name="Zollner A."/>
            <person name="Karpfinger-Hartl L."/>
        </authorList>
    </citation>
    <scope>NUCLEOTIDE SEQUENCE [LARGE SCALE GENOMIC DNA]</scope>
    <source>
        <strain>ATCC 204508 / S288c</strain>
    </source>
</reference>
<reference key="2">
    <citation type="journal article" date="2014" name="G3 (Bethesda)">
        <title>The reference genome sequence of Saccharomyces cerevisiae: Then and now.</title>
        <authorList>
            <person name="Engel S.R."/>
            <person name="Dietrich F.S."/>
            <person name="Fisk D.G."/>
            <person name="Binkley G."/>
            <person name="Balakrishnan R."/>
            <person name="Costanzo M.C."/>
            <person name="Dwight S.S."/>
            <person name="Hitz B.C."/>
            <person name="Karra K."/>
            <person name="Nash R.S."/>
            <person name="Weng S."/>
            <person name="Wong E.D."/>
            <person name="Lloyd P."/>
            <person name="Skrzypek M.S."/>
            <person name="Miyasato S.R."/>
            <person name="Simison M."/>
            <person name="Cherry J.M."/>
        </authorList>
    </citation>
    <scope>GENOME REANNOTATION</scope>
    <source>
        <strain>ATCC 204508 / S288c</strain>
    </source>
</reference>
<reference key="3">
    <citation type="journal article" date="2002" name="Nat. Biotechnol.">
        <title>An integrated approach for finding overlooked genes in yeast.</title>
        <authorList>
            <person name="Kumar A."/>
            <person name="Harrison P.M."/>
            <person name="Cheung K.-H."/>
            <person name="Lan N."/>
            <person name="Echols N."/>
            <person name="Bertone P."/>
            <person name="Miller P."/>
            <person name="Gerstein M.B."/>
            <person name="Snyder M."/>
        </authorList>
    </citation>
    <scope>NUCLEOTIDE SEQUENCE [GENOMIC DNA]</scope>
</reference>
<evidence type="ECO:0000305" key="1"/>
<evidence type="ECO:0000305" key="2">
    <source>
    </source>
</evidence>
<name>YJ140_YEAST</name>
<gene>
    <name type="ordered locus">YJR140W-A</name>
</gene>
<comment type="miscellaneous">
    <text evidence="1">Completely overlaps HIR3.</text>
</comment>
<comment type="caution">
    <text evidence="2">Product of a dubious gene prediction unlikely to encode a functional protein. Because of that it is not part of the S.cerevisiae S288c complete/reference proteome set.</text>
</comment>